<reference key="1">
    <citation type="submission" date="2005-08" db="EMBL/GenBank/DDBJ databases">
        <title>Complete sequence of Chlorobium chlorochromatii CaD3.</title>
        <authorList>
            <consortium name="US DOE Joint Genome Institute"/>
            <person name="Copeland A."/>
            <person name="Lucas S."/>
            <person name="Lapidus A."/>
            <person name="Barry K."/>
            <person name="Detter J.C."/>
            <person name="Glavina T."/>
            <person name="Hammon N."/>
            <person name="Israni S."/>
            <person name="Pitluck S."/>
            <person name="Bryant D."/>
            <person name="Schmutz J."/>
            <person name="Larimer F."/>
            <person name="Land M."/>
            <person name="Kyrpides N."/>
            <person name="Ivanova N."/>
            <person name="Richardson P."/>
        </authorList>
    </citation>
    <scope>NUCLEOTIDE SEQUENCE [LARGE SCALE GENOMIC DNA]</scope>
    <source>
        <strain>CaD3</strain>
    </source>
</reference>
<accession>Q3ATB2</accession>
<sequence length="605" mass="67715">MGLPNTDSCRIRNFCIIAHIDHGKSTLADRLLEITRTLDRTQMGSAQVLDDMDLERERGITIKSHAIQMRYNAADGLEYTLNLIDTPGHVDFSYEVSRSLAACEGALLIVDATQGVEAQTIANLYLALDAGLDIIPVINKIDLPSSDVEGVARQIIDLMGVKRDEILAVSAKAGIGISELMESIVHRIPPPAVKNNEPLRALIFDSVFDAYRGAVVYLRIVEGLLKRGDKVRFFASDKLFTADEIGIMTMTRQPREQLASGNVGYLICSIKDVKDAKVGDTVTLADNPAVERLSGYKEVKPMVFSGLYPINSNEFEDLRESLEKLALNDASLIYTPETSVALGFGFRCGFLGLLHMEIIQERLEREYGVNIITTVPNVEYRVFLTNGEEVEVDNPSVMPEAGRIKQVEEPYVSMQIITLADYIGNIMKLGMERRGEYKTTDYLDTTRVIMHFEFPLAEVVFDFHDKLKSISKGYASMDYEYIGYRDSDLVKLDVMLNGDTVDALSIIVHRSKAYEWGKKLCQKLKGIIPKQMYEVAIQAAIGSRIISRETISAMRKNVLAKCYGGDISRKRKLLEKQKEGKKRMKQVGRVEVPQEAFLALLNIDE</sequence>
<keyword id="KW-0997">Cell inner membrane</keyword>
<keyword id="KW-1003">Cell membrane</keyword>
<keyword id="KW-0342">GTP-binding</keyword>
<keyword id="KW-0378">Hydrolase</keyword>
<keyword id="KW-0472">Membrane</keyword>
<keyword id="KW-0547">Nucleotide-binding</keyword>
<keyword id="KW-0648">Protein biosynthesis</keyword>
<feature type="chain" id="PRO_0000224752" description="Elongation factor 4">
    <location>
        <begin position="1"/>
        <end position="605"/>
    </location>
</feature>
<feature type="domain" description="tr-type G">
    <location>
        <begin position="9"/>
        <end position="192"/>
    </location>
</feature>
<feature type="binding site" evidence="1">
    <location>
        <begin position="21"/>
        <end position="26"/>
    </location>
    <ligand>
        <name>GTP</name>
        <dbReference type="ChEBI" id="CHEBI:37565"/>
    </ligand>
</feature>
<feature type="binding site" evidence="1">
    <location>
        <begin position="139"/>
        <end position="142"/>
    </location>
    <ligand>
        <name>GTP</name>
        <dbReference type="ChEBI" id="CHEBI:37565"/>
    </ligand>
</feature>
<dbReference type="EC" id="3.6.5.n1" evidence="1"/>
<dbReference type="EMBL" id="CP000108">
    <property type="protein sequence ID" value="ABB27763.1"/>
    <property type="molecule type" value="Genomic_DNA"/>
</dbReference>
<dbReference type="SMR" id="Q3ATB2"/>
<dbReference type="STRING" id="340177.Cag_0490"/>
<dbReference type="KEGG" id="cch:Cag_0490"/>
<dbReference type="eggNOG" id="COG0481">
    <property type="taxonomic scope" value="Bacteria"/>
</dbReference>
<dbReference type="HOGENOM" id="CLU_009995_3_3_10"/>
<dbReference type="OrthoDB" id="9801591at2"/>
<dbReference type="GO" id="GO:0005886">
    <property type="term" value="C:plasma membrane"/>
    <property type="evidence" value="ECO:0007669"/>
    <property type="project" value="UniProtKB-SubCell"/>
</dbReference>
<dbReference type="GO" id="GO:0005525">
    <property type="term" value="F:GTP binding"/>
    <property type="evidence" value="ECO:0007669"/>
    <property type="project" value="UniProtKB-UniRule"/>
</dbReference>
<dbReference type="GO" id="GO:0003924">
    <property type="term" value="F:GTPase activity"/>
    <property type="evidence" value="ECO:0007669"/>
    <property type="project" value="UniProtKB-UniRule"/>
</dbReference>
<dbReference type="GO" id="GO:0043022">
    <property type="term" value="F:ribosome binding"/>
    <property type="evidence" value="ECO:0007669"/>
    <property type="project" value="UniProtKB-UniRule"/>
</dbReference>
<dbReference type="GO" id="GO:0003746">
    <property type="term" value="F:translation elongation factor activity"/>
    <property type="evidence" value="ECO:0007669"/>
    <property type="project" value="UniProtKB-UniRule"/>
</dbReference>
<dbReference type="GO" id="GO:0045727">
    <property type="term" value="P:positive regulation of translation"/>
    <property type="evidence" value="ECO:0007669"/>
    <property type="project" value="UniProtKB-UniRule"/>
</dbReference>
<dbReference type="CDD" id="cd03699">
    <property type="entry name" value="EF4_II"/>
    <property type="match status" value="1"/>
</dbReference>
<dbReference type="CDD" id="cd16260">
    <property type="entry name" value="EF4_III"/>
    <property type="match status" value="1"/>
</dbReference>
<dbReference type="CDD" id="cd01890">
    <property type="entry name" value="LepA"/>
    <property type="match status" value="1"/>
</dbReference>
<dbReference type="CDD" id="cd03709">
    <property type="entry name" value="lepA_C"/>
    <property type="match status" value="1"/>
</dbReference>
<dbReference type="FunFam" id="3.40.50.300:FF:000078">
    <property type="entry name" value="Elongation factor 4"/>
    <property type="match status" value="1"/>
</dbReference>
<dbReference type="FunFam" id="2.40.30.10:FF:000015">
    <property type="entry name" value="Translation factor GUF1, mitochondrial"/>
    <property type="match status" value="1"/>
</dbReference>
<dbReference type="FunFam" id="3.30.70.240:FF:000007">
    <property type="entry name" value="Translation factor GUF1, mitochondrial"/>
    <property type="match status" value="1"/>
</dbReference>
<dbReference type="FunFam" id="3.30.70.2570:FF:000001">
    <property type="entry name" value="Translation factor GUF1, mitochondrial"/>
    <property type="match status" value="1"/>
</dbReference>
<dbReference type="FunFam" id="3.30.70.870:FF:000004">
    <property type="entry name" value="Translation factor GUF1, mitochondrial"/>
    <property type="match status" value="1"/>
</dbReference>
<dbReference type="Gene3D" id="3.30.70.240">
    <property type="match status" value="1"/>
</dbReference>
<dbReference type="Gene3D" id="3.30.70.2570">
    <property type="entry name" value="Elongation factor 4, C-terminal domain"/>
    <property type="match status" value="1"/>
</dbReference>
<dbReference type="Gene3D" id="3.30.70.870">
    <property type="entry name" value="Elongation Factor G (Translational Gtpase), domain 3"/>
    <property type="match status" value="1"/>
</dbReference>
<dbReference type="Gene3D" id="3.40.50.300">
    <property type="entry name" value="P-loop containing nucleotide triphosphate hydrolases"/>
    <property type="match status" value="1"/>
</dbReference>
<dbReference type="Gene3D" id="2.40.30.10">
    <property type="entry name" value="Translation factors"/>
    <property type="match status" value="1"/>
</dbReference>
<dbReference type="HAMAP" id="MF_00071">
    <property type="entry name" value="LepA"/>
    <property type="match status" value="1"/>
</dbReference>
<dbReference type="InterPro" id="IPR006297">
    <property type="entry name" value="EF-4"/>
</dbReference>
<dbReference type="InterPro" id="IPR035647">
    <property type="entry name" value="EFG_III/V"/>
</dbReference>
<dbReference type="InterPro" id="IPR000640">
    <property type="entry name" value="EFG_V-like"/>
</dbReference>
<dbReference type="InterPro" id="IPR004161">
    <property type="entry name" value="EFTu-like_2"/>
</dbReference>
<dbReference type="InterPro" id="IPR038363">
    <property type="entry name" value="LepA_C_sf"/>
</dbReference>
<dbReference type="InterPro" id="IPR013842">
    <property type="entry name" value="LepA_CTD"/>
</dbReference>
<dbReference type="InterPro" id="IPR035654">
    <property type="entry name" value="LepA_IV"/>
</dbReference>
<dbReference type="InterPro" id="IPR027417">
    <property type="entry name" value="P-loop_NTPase"/>
</dbReference>
<dbReference type="InterPro" id="IPR005225">
    <property type="entry name" value="Small_GTP-bd"/>
</dbReference>
<dbReference type="InterPro" id="IPR000795">
    <property type="entry name" value="T_Tr_GTP-bd_dom"/>
</dbReference>
<dbReference type="NCBIfam" id="TIGR01393">
    <property type="entry name" value="lepA"/>
    <property type="match status" value="1"/>
</dbReference>
<dbReference type="NCBIfam" id="TIGR00231">
    <property type="entry name" value="small_GTP"/>
    <property type="match status" value="1"/>
</dbReference>
<dbReference type="PANTHER" id="PTHR43512:SF4">
    <property type="entry name" value="TRANSLATION FACTOR GUF1 HOMOLOG, CHLOROPLASTIC"/>
    <property type="match status" value="1"/>
</dbReference>
<dbReference type="PANTHER" id="PTHR43512">
    <property type="entry name" value="TRANSLATION FACTOR GUF1-RELATED"/>
    <property type="match status" value="1"/>
</dbReference>
<dbReference type="Pfam" id="PF00679">
    <property type="entry name" value="EFG_C"/>
    <property type="match status" value="1"/>
</dbReference>
<dbReference type="Pfam" id="PF00009">
    <property type="entry name" value="GTP_EFTU"/>
    <property type="match status" value="1"/>
</dbReference>
<dbReference type="Pfam" id="PF03144">
    <property type="entry name" value="GTP_EFTU_D2"/>
    <property type="match status" value="1"/>
</dbReference>
<dbReference type="Pfam" id="PF06421">
    <property type="entry name" value="LepA_C"/>
    <property type="match status" value="1"/>
</dbReference>
<dbReference type="PRINTS" id="PR00315">
    <property type="entry name" value="ELONGATNFCT"/>
</dbReference>
<dbReference type="SUPFAM" id="SSF54980">
    <property type="entry name" value="EF-G C-terminal domain-like"/>
    <property type="match status" value="2"/>
</dbReference>
<dbReference type="SUPFAM" id="SSF52540">
    <property type="entry name" value="P-loop containing nucleoside triphosphate hydrolases"/>
    <property type="match status" value="1"/>
</dbReference>
<dbReference type="PROSITE" id="PS51722">
    <property type="entry name" value="G_TR_2"/>
    <property type="match status" value="1"/>
</dbReference>
<protein>
    <recommendedName>
        <fullName evidence="1">Elongation factor 4</fullName>
        <shortName evidence="1">EF-4</shortName>
        <ecNumber evidence="1">3.6.5.n1</ecNumber>
    </recommendedName>
    <alternativeName>
        <fullName evidence="1">Ribosomal back-translocase LepA</fullName>
    </alternativeName>
</protein>
<comment type="function">
    <text evidence="1">Required for accurate and efficient protein synthesis under certain stress conditions. May act as a fidelity factor of the translation reaction, by catalyzing a one-codon backward translocation of tRNAs on improperly translocated ribosomes. Back-translocation proceeds from a post-translocation (POST) complex to a pre-translocation (PRE) complex, thus giving elongation factor G a second chance to translocate the tRNAs correctly. Binds to ribosomes in a GTP-dependent manner.</text>
</comment>
<comment type="catalytic activity">
    <reaction evidence="1">
        <text>GTP + H2O = GDP + phosphate + H(+)</text>
        <dbReference type="Rhea" id="RHEA:19669"/>
        <dbReference type="ChEBI" id="CHEBI:15377"/>
        <dbReference type="ChEBI" id="CHEBI:15378"/>
        <dbReference type="ChEBI" id="CHEBI:37565"/>
        <dbReference type="ChEBI" id="CHEBI:43474"/>
        <dbReference type="ChEBI" id="CHEBI:58189"/>
        <dbReference type="EC" id="3.6.5.n1"/>
    </reaction>
</comment>
<comment type="subcellular location">
    <subcellularLocation>
        <location evidence="1">Cell inner membrane</location>
        <topology evidence="1">Peripheral membrane protein</topology>
        <orientation evidence="1">Cytoplasmic side</orientation>
    </subcellularLocation>
</comment>
<comment type="similarity">
    <text evidence="1">Belongs to the TRAFAC class translation factor GTPase superfamily. Classic translation factor GTPase family. LepA subfamily.</text>
</comment>
<name>LEPA_CHLCH</name>
<organism>
    <name type="scientific">Chlorobium chlorochromatii (strain CaD3)</name>
    <dbReference type="NCBI Taxonomy" id="340177"/>
    <lineage>
        <taxon>Bacteria</taxon>
        <taxon>Pseudomonadati</taxon>
        <taxon>Chlorobiota</taxon>
        <taxon>Chlorobiia</taxon>
        <taxon>Chlorobiales</taxon>
        <taxon>Chlorobiaceae</taxon>
        <taxon>Chlorobium/Pelodictyon group</taxon>
        <taxon>Chlorobium</taxon>
    </lineage>
</organism>
<evidence type="ECO:0000255" key="1">
    <source>
        <dbReference type="HAMAP-Rule" id="MF_00071"/>
    </source>
</evidence>
<gene>
    <name evidence="1" type="primary">lepA</name>
    <name type="ordered locus">Cag_0490</name>
</gene>
<proteinExistence type="inferred from homology"/>